<organism>
    <name type="scientific">Danio rerio</name>
    <name type="common">Zebrafish</name>
    <name type="synonym">Brachydanio rerio</name>
    <dbReference type="NCBI Taxonomy" id="7955"/>
    <lineage>
        <taxon>Eukaryota</taxon>
        <taxon>Metazoa</taxon>
        <taxon>Chordata</taxon>
        <taxon>Craniata</taxon>
        <taxon>Vertebrata</taxon>
        <taxon>Euteleostomi</taxon>
        <taxon>Actinopterygii</taxon>
        <taxon>Neopterygii</taxon>
        <taxon>Teleostei</taxon>
        <taxon>Ostariophysi</taxon>
        <taxon>Cypriniformes</taxon>
        <taxon>Danionidae</taxon>
        <taxon>Danioninae</taxon>
        <taxon>Danio</taxon>
    </lineage>
</organism>
<keyword id="KW-1003">Cell membrane</keyword>
<keyword id="KW-0175">Coiled coil</keyword>
<keyword id="KW-0325">Glycoprotein</keyword>
<keyword id="KW-0472">Membrane</keyword>
<keyword id="KW-1185">Reference proteome</keyword>
<keyword id="KW-0812">Transmembrane</keyword>
<keyword id="KW-1133">Transmembrane helix</keyword>
<proteinExistence type="evidence at transcript level"/>
<gene>
    <name type="primary">lmbrd2b</name>
    <name type="synonym">lmbrd2</name>
    <name type="ORF">zgc:73387</name>
</gene>
<reference key="1">
    <citation type="submission" date="2003-12" db="EMBL/GenBank/DDBJ databases">
        <authorList>
            <consortium name="NIH - Zebrafish Gene Collection (ZGC) project"/>
        </authorList>
    </citation>
    <scope>NUCLEOTIDE SEQUENCE [LARGE SCALE MRNA]</scope>
    <source>
        <tissue>Retina</tissue>
    </source>
</reference>
<evidence type="ECO:0000250" key="1">
    <source>
        <dbReference type="UniProtKB" id="Q68DH5"/>
    </source>
</evidence>
<evidence type="ECO:0000255" key="2"/>
<evidence type="ECO:0000256" key="3">
    <source>
        <dbReference type="SAM" id="MobiDB-lite"/>
    </source>
</evidence>
<evidence type="ECO:0000305" key="4"/>
<name>LMD2B_DANRE</name>
<sequence length="704" mass="82046">MSGAALGIEIVVVFFLALFLLHRYGDFKKQQRMVLFGTLLAWYLCFLIVFILPLDVSTTIYNQCLIDQEAQTQTPSVSPVLSEQTTANASISPAKSTQRVCYKPWSYIPDGIMPVFWRVVYWTSQCLTWLLLPFMQSYARSGGFTITGKIKTALIENAIYYGTYLFIFGSLLIYVAVHPQWHLSWYELQTIGITAANTWGLFLLVLLLGYGLVDIPRSYWEASRQGHLLIKTYFKAAKLMTEKADSEENLEDVMEEVRKINESIKYNHPLRKNVDTILRKCPLEYQEKMGRNMDDFEDFDDKQNSYPTERSLSKLHKQVIYAVQRHNRTRVQWQILLEQAFHLEDVAKNETSTSRQFVHSFAPPEPVGWFRRYIYTPTAEWYWECLLKQWFYRVLAVVLALFSVAVVWSECTFFSTHPVLSLFAVFIQLAERDYNYLYIEMACFITIFFLCTCVYSTVFRIRVFNYYYLASHHQTDAYSLQFSGMLFCRLTPPLCLNFLGLIHMDSAISHQAKKQTAYTSIMGSMRVLSFIANGFYIYYPMLIVVLCIATYFSLGTRCLNLLGFQQFMGENEMTSDLIDEGRELLRRERRKRQRIEDGENRRREWRERYAQRDENAARNRTSMSEMKETNYGETLNANTNRQAKYTRSGSQSGRDSIELLQDAEPLDFNAETLTDDPLQSDTGRHAGGRYLSMSSSRNRIFDDV</sequence>
<accession>Q6P4P2</accession>
<dbReference type="EMBL" id="BC063324">
    <property type="protein sequence ID" value="AAH63324.1"/>
    <property type="molecule type" value="mRNA"/>
</dbReference>
<dbReference type="RefSeq" id="NP_956238.1">
    <property type="nucleotide sequence ID" value="NM_199944.1"/>
</dbReference>
<dbReference type="SMR" id="Q6P4P2"/>
<dbReference type="FunCoup" id="Q6P4P2">
    <property type="interactions" value="1964"/>
</dbReference>
<dbReference type="STRING" id="7955.ENSDARP00000122007"/>
<dbReference type="GlyCosmos" id="Q6P4P2">
    <property type="glycosylation" value="1 site, No reported glycans"/>
</dbReference>
<dbReference type="PaxDb" id="7955-ENSDARP00000122007"/>
<dbReference type="GeneID" id="335257"/>
<dbReference type="KEGG" id="dre:335257"/>
<dbReference type="AGR" id="ZFIN:ZDB-GENE-030131-7197"/>
<dbReference type="CTD" id="335257"/>
<dbReference type="ZFIN" id="ZDB-GENE-030131-7197">
    <property type="gene designation" value="lmbrd2b"/>
</dbReference>
<dbReference type="eggNOG" id="KOG2296">
    <property type="taxonomic scope" value="Eukaryota"/>
</dbReference>
<dbReference type="InParanoid" id="Q6P4P2"/>
<dbReference type="OrthoDB" id="203099at2759"/>
<dbReference type="PhylomeDB" id="Q6P4P2"/>
<dbReference type="PRO" id="PR:Q6P4P2"/>
<dbReference type="Proteomes" id="UP000000437">
    <property type="component" value="Chromosome 21"/>
</dbReference>
<dbReference type="GO" id="GO:0016020">
    <property type="term" value="C:membrane"/>
    <property type="evidence" value="ECO:0000318"/>
    <property type="project" value="GO_Central"/>
</dbReference>
<dbReference type="GO" id="GO:0005886">
    <property type="term" value="C:plasma membrane"/>
    <property type="evidence" value="ECO:0007669"/>
    <property type="project" value="UniProtKB-SubCell"/>
</dbReference>
<dbReference type="GO" id="GO:0071875">
    <property type="term" value="P:adrenergic receptor signaling pathway"/>
    <property type="evidence" value="ECO:0000250"/>
    <property type="project" value="UniProtKB"/>
</dbReference>
<dbReference type="InterPro" id="IPR051584">
    <property type="entry name" value="GPCR-associated_LMBR1"/>
</dbReference>
<dbReference type="InterPro" id="IPR006876">
    <property type="entry name" value="LMBR1-like_membr_prot"/>
</dbReference>
<dbReference type="PANTHER" id="PTHR21355">
    <property type="entry name" value="G-PROTEIN COUPLED RECEPTOR-ASSOCIATED PROTEIN LMBRD2"/>
    <property type="match status" value="1"/>
</dbReference>
<dbReference type="PANTHER" id="PTHR21355:SF0">
    <property type="entry name" value="G-PROTEIN COUPLED RECEPTOR-ASSOCIATED PROTEIN LMBRD2"/>
    <property type="match status" value="1"/>
</dbReference>
<dbReference type="Pfam" id="PF04791">
    <property type="entry name" value="LMBR1"/>
    <property type="match status" value="1"/>
</dbReference>
<feature type="chain" id="PRO_0000299164" description="G-protein coupled receptor-associated protein LMBRD2B">
    <location>
        <begin position="1"/>
        <end position="704"/>
    </location>
</feature>
<feature type="topological domain" description="Extracellular" evidence="2">
    <location>
        <begin position="1"/>
        <end position="3"/>
    </location>
</feature>
<feature type="transmembrane region" description="Helical" evidence="2">
    <location>
        <begin position="4"/>
        <end position="21"/>
    </location>
</feature>
<feature type="topological domain" description="Cytoplasmic" evidence="2">
    <location>
        <begin position="22"/>
        <end position="33"/>
    </location>
</feature>
<feature type="transmembrane region" description="Helical" evidence="2">
    <location>
        <begin position="34"/>
        <end position="54"/>
    </location>
</feature>
<feature type="topological domain" description="Extracellular" evidence="2">
    <location>
        <begin position="55"/>
        <end position="111"/>
    </location>
</feature>
<feature type="transmembrane region" description="Helical" evidence="2">
    <location>
        <begin position="112"/>
        <end position="132"/>
    </location>
</feature>
<feature type="topological domain" description="Cytoplasmic" evidence="2">
    <location>
        <begin position="133"/>
        <end position="157"/>
    </location>
</feature>
<feature type="transmembrane region" description="Helical" evidence="2">
    <location>
        <begin position="158"/>
        <end position="178"/>
    </location>
</feature>
<feature type="topological domain" description="Extracellular" evidence="2">
    <location>
        <begin position="179"/>
        <end position="192"/>
    </location>
</feature>
<feature type="transmembrane region" description="Helical" evidence="2">
    <location>
        <begin position="193"/>
        <end position="213"/>
    </location>
</feature>
<feature type="topological domain" description="Cytoplasmic" evidence="2">
    <location>
        <begin position="214"/>
        <end position="393"/>
    </location>
</feature>
<feature type="transmembrane region" description="Helical" evidence="2">
    <location>
        <begin position="394"/>
        <end position="414"/>
    </location>
</feature>
<feature type="topological domain" description="Extracellular" evidence="2">
    <location>
        <begin position="415"/>
        <end position="438"/>
    </location>
</feature>
<feature type="transmembrane region" description="Helical" evidence="2">
    <location>
        <begin position="439"/>
        <end position="459"/>
    </location>
</feature>
<feature type="topological domain" description="Cytoplasmic" evidence="2">
    <location>
        <begin position="460"/>
        <end position="481"/>
    </location>
</feature>
<feature type="transmembrane region" description="Helical" evidence="2">
    <location>
        <begin position="482"/>
        <end position="502"/>
    </location>
</feature>
<feature type="topological domain" description="Extracellular" evidence="2">
    <location>
        <begin position="503"/>
        <end position="527"/>
    </location>
</feature>
<feature type="transmembrane region" description="Helical" evidence="2">
    <location>
        <begin position="528"/>
        <end position="548"/>
    </location>
</feature>
<feature type="topological domain" description="Cytoplasmic" evidence="2">
    <location>
        <begin position="549"/>
        <end position="704"/>
    </location>
</feature>
<feature type="region of interest" description="Disordered" evidence="3">
    <location>
        <begin position="613"/>
        <end position="654"/>
    </location>
</feature>
<feature type="region of interest" description="Disordered" evidence="3">
    <location>
        <begin position="672"/>
        <end position="704"/>
    </location>
</feature>
<feature type="coiled-coil region" evidence="2">
    <location>
        <begin position="235"/>
        <end position="266"/>
    </location>
</feature>
<feature type="coiled-coil region" evidence="2">
    <location>
        <begin position="576"/>
        <end position="612"/>
    </location>
</feature>
<feature type="compositionally biased region" description="Polar residues" evidence="3">
    <location>
        <begin position="631"/>
        <end position="654"/>
    </location>
</feature>
<feature type="glycosylation site" description="N-linked (GlcNAc...) asparagine" evidence="2">
    <location>
        <position position="88"/>
    </location>
</feature>
<comment type="function">
    <text evidence="1">May associate with G-protein coupled receptors and regulate downstream signaling pathways.</text>
</comment>
<comment type="subcellular location">
    <subcellularLocation>
        <location evidence="1">Cell membrane</location>
        <topology evidence="2">Multi-pass membrane protein</topology>
    </subcellularLocation>
</comment>
<comment type="similarity">
    <text evidence="4">Belongs to the LIMR family.</text>
</comment>
<protein>
    <recommendedName>
        <fullName evidence="1">G-protein coupled receptor-associated protein LMBRD2B</fullName>
    </recommendedName>
    <alternativeName>
        <fullName>LMBR1 domain-containing protein 2-B</fullName>
    </alternativeName>
</protein>